<feature type="chain" id="PRO_0000196089" description="Homeobox protein engrailed-like SMOX-2">
    <location>
        <begin position="1"/>
        <end position="524"/>
    </location>
</feature>
<feature type="DNA-binding region" description="Homeobox" evidence="1">
    <location>
        <begin position="423"/>
        <end position="482"/>
    </location>
</feature>
<feature type="region of interest" description="Disordered" evidence="2">
    <location>
        <begin position="194"/>
        <end position="218"/>
    </location>
</feature>
<protein>
    <recommendedName>
        <fullName>Homeobox protein engrailed-like SMOX-2</fullName>
    </recommendedName>
</protein>
<accession>Q26601</accession>
<evidence type="ECO:0000255" key="1">
    <source>
        <dbReference type="PROSITE-ProRule" id="PRU00108"/>
    </source>
</evidence>
<evidence type="ECO:0000256" key="2">
    <source>
        <dbReference type="SAM" id="MobiDB-lite"/>
    </source>
</evidence>
<evidence type="ECO:0000305" key="3"/>
<name>SMOX2_SCHMA</name>
<gene>
    <name type="primary">SMOX-2</name>
</gene>
<sequence>MFKLLDNFNEKSKSIMIEQMKQQYCLLQYDKEMVTNFLNFINHHYIWNCYHNNSNNSYNNDLDMNNIQEKLIIEHLDPLMLINSYTDYPFWSSMLMLAVNEAVTTTTTTTTTTTTSTTTTTSGIIPLSSTIIPSTIISPVKTSLSSLSMMTIDDLQNDISKINYEEDFFSKLLKCTLIRNENSYSNEIEQLSLSSSSSSSSSSSSSSSSSSCSTNSSSSVYMSEKKANGFFVKDILSFDKHKVIRRQKTDDSFEKEVLVKGRDEEKKEEVQGRQKKDNINKYKIINCTDISHNNMNYVCDNSKEPQVENLQKNKLINKFTVGSEEEEDNDDINDAAKNNNTNYLRKTVSDDGMKLKSNRNHNKKLGSRGRIHEITSSNKLNTNDPSRLHLPAWVFCTRYSDRPSSGPRIRKPRMNRSNDELNLKRPRTSFTVPQLKRLSQEFEKNRYLDELRRKKLATELDLRESQVKIWFQNKRAKTKKASGAQNCLALHLMAEGLYNHSVRVRSDIEEDEEDSDDMNTSEKE</sequence>
<proteinExistence type="evidence at transcript level"/>
<dbReference type="EMBL" id="M85305">
    <property type="protein sequence ID" value="AAA29929.1"/>
    <property type="molecule type" value="mRNA"/>
</dbReference>
<dbReference type="PIR" id="S33640">
    <property type="entry name" value="S33640"/>
</dbReference>
<dbReference type="SMR" id="Q26601"/>
<dbReference type="STRING" id="6183.Q26601"/>
<dbReference type="eggNOG" id="KOG0493">
    <property type="taxonomic scope" value="Eukaryota"/>
</dbReference>
<dbReference type="HOGENOM" id="CLU_051739_0_0_1"/>
<dbReference type="InParanoid" id="Q26601"/>
<dbReference type="Proteomes" id="UP000008854">
    <property type="component" value="Unassembled WGS sequence"/>
</dbReference>
<dbReference type="GO" id="GO:0005634">
    <property type="term" value="C:nucleus"/>
    <property type="evidence" value="ECO:0007669"/>
    <property type="project" value="UniProtKB-SubCell"/>
</dbReference>
<dbReference type="GO" id="GO:0000981">
    <property type="term" value="F:DNA-binding transcription factor activity, RNA polymerase II-specific"/>
    <property type="evidence" value="ECO:0007669"/>
    <property type="project" value="InterPro"/>
</dbReference>
<dbReference type="GO" id="GO:0000978">
    <property type="term" value="F:RNA polymerase II cis-regulatory region sequence-specific DNA binding"/>
    <property type="evidence" value="ECO:0007669"/>
    <property type="project" value="TreeGrafter"/>
</dbReference>
<dbReference type="GO" id="GO:0030182">
    <property type="term" value="P:neuron differentiation"/>
    <property type="evidence" value="ECO:0007669"/>
    <property type="project" value="TreeGrafter"/>
</dbReference>
<dbReference type="CDD" id="cd00086">
    <property type="entry name" value="homeodomain"/>
    <property type="match status" value="1"/>
</dbReference>
<dbReference type="Gene3D" id="1.10.10.60">
    <property type="entry name" value="Homeodomain-like"/>
    <property type="match status" value="1"/>
</dbReference>
<dbReference type="InterPro" id="IPR050720">
    <property type="entry name" value="Engrailed_Homeobox_TFs"/>
</dbReference>
<dbReference type="InterPro" id="IPR001356">
    <property type="entry name" value="HD"/>
</dbReference>
<dbReference type="InterPro" id="IPR000747">
    <property type="entry name" value="HD_engrailed"/>
</dbReference>
<dbReference type="InterPro" id="IPR020479">
    <property type="entry name" value="HD_metazoa"/>
</dbReference>
<dbReference type="InterPro" id="IPR019549">
    <property type="entry name" value="Homeobox-engrailed_C-terminal"/>
</dbReference>
<dbReference type="InterPro" id="IPR019737">
    <property type="entry name" value="Homeobox-engrailed_CS"/>
</dbReference>
<dbReference type="InterPro" id="IPR017970">
    <property type="entry name" value="Homeobox_CS"/>
</dbReference>
<dbReference type="InterPro" id="IPR009057">
    <property type="entry name" value="Homeodomain-like_sf"/>
</dbReference>
<dbReference type="PANTHER" id="PTHR24341">
    <property type="entry name" value="HOMEOBOX PROTEIN ENGRAILED"/>
    <property type="match status" value="1"/>
</dbReference>
<dbReference type="PANTHER" id="PTHR24341:SF6">
    <property type="entry name" value="HOMEOBOX PROTEIN INVECTED"/>
    <property type="match status" value="1"/>
</dbReference>
<dbReference type="Pfam" id="PF10525">
    <property type="entry name" value="Engrail_1_C_sig"/>
    <property type="match status" value="1"/>
</dbReference>
<dbReference type="Pfam" id="PF00046">
    <property type="entry name" value="Homeodomain"/>
    <property type="match status" value="1"/>
</dbReference>
<dbReference type="PRINTS" id="PR00026">
    <property type="entry name" value="ENGRAILED"/>
</dbReference>
<dbReference type="PRINTS" id="PR00024">
    <property type="entry name" value="HOMEOBOX"/>
</dbReference>
<dbReference type="SMART" id="SM00389">
    <property type="entry name" value="HOX"/>
    <property type="match status" value="1"/>
</dbReference>
<dbReference type="SUPFAM" id="SSF46689">
    <property type="entry name" value="Homeodomain-like"/>
    <property type="match status" value="1"/>
</dbReference>
<dbReference type="PROSITE" id="PS00033">
    <property type="entry name" value="ENGRAILED"/>
    <property type="match status" value="1"/>
</dbReference>
<dbReference type="PROSITE" id="PS00027">
    <property type="entry name" value="HOMEOBOX_1"/>
    <property type="match status" value="1"/>
</dbReference>
<dbReference type="PROSITE" id="PS50071">
    <property type="entry name" value="HOMEOBOX_2"/>
    <property type="match status" value="1"/>
</dbReference>
<comment type="subcellular location">
    <subcellularLocation>
        <location evidence="1">Nucleus</location>
    </subcellularLocation>
</comment>
<comment type="similarity">
    <text evidence="3">Belongs to the engrailed homeobox family.</text>
</comment>
<organism>
    <name type="scientific">Schistosoma mansoni</name>
    <name type="common">Blood fluke</name>
    <dbReference type="NCBI Taxonomy" id="6183"/>
    <lineage>
        <taxon>Eukaryota</taxon>
        <taxon>Metazoa</taxon>
        <taxon>Spiralia</taxon>
        <taxon>Lophotrochozoa</taxon>
        <taxon>Platyhelminthes</taxon>
        <taxon>Trematoda</taxon>
        <taxon>Digenea</taxon>
        <taxon>Strigeidida</taxon>
        <taxon>Schistosomatoidea</taxon>
        <taxon>Schistosomatidae</taxon>
        <taxon>Schistosoma</taxon>
    </lineage>
</organism>
<keyword id="KW-0217">Developmental protein</keyword>
<keyword id="KW-0238">DNA-binding</keyword>
<keyword id="KW-0371">Homeobox</keyword>
<keyword id="KW-0539">Nucleus</keyword>
<keyword id="KW-1185">Reference proteome</keyword>
<reference key="1">
    <citation type="journal article" date="1992" name="Mech. Dev.">
        <title>Conserved classes of homeodomains in Schistosoma mansoni, an early bilateral metazoan.</title>
        <authorList>
            <person name="Webster P.J."/>
            <person name="Mansour T.E."/>
        </authorList>
    </citation>
    <scope>NUCLEOTIDE SEQUENCE [MRNA]</scope>
    <source>
        <strain>Puerto Rican</strain>
    </source>
</reference>